<organismHost>
    <name type="scientific">Microplitis demolitor</name>
    <name type="common">Parasitoid wasp</name>
    <dbReference type="NCBI Taxonomy" id="69319"/>
</organismHost>
<organism>
    <name type="scientific">Microplitis demolitor bracovirus (isolate Webb)</name>
    <name type="common">MdBV</name>
    <dbReference type="NCBI Taxonomy" id="654919"/>
    <lineage>
        <taxon>Viruses</taxon>
        <taxon>Viruses incertae sedis</taxon>
        <taxon>Polydnaviriformidae</taxon>
        <taxon>Bracoviriform</taxon>
        <taxon>Microplitis demolitor bracovirus</taxon>
    </lineage>
</organism>
<feature type="chain" id="PRO_0000405360" description="I-Kappa-B like protein C2">
    <location>
        <begin position="1"/>
        <end position="181"/>
    </location>
</feature>
<feature type="repeat" description="ANK 1">
    <location>
        <begin position="54"/>
        <end position="86"/>
    </location>
</feature>
<feature type="repeat" description="ANK 2">
    <location>
        <begin position="91"/>
        <end position="121"/>
    </location>
</feature>
<feature type="repeat" description="ANK 3">
    <location>
        <begin position="125"/>
        <end position="154"/>
    </location>
</feature>
<sequence length="181" mass="20853">MWSLQDSIFTCERNHEGENIIHYLCRNGGVIDLLTFRNAINDENRYLLSEYNRDGKXCMHIVVSQDKVDPINKLMLLMKWGADINSKDQKDGNTVLHIAVLTNNYEVAKWLCQQPGVDMEIINFARKTPYQIACDRANTRMMDLLXKNGARCDVPLKINTARRRASHDYGVKLIRMGESAR</sequence>
<name>IKBC2_MDBVW</name>
<gene>
    <name type="primary">C2</name>
</gene>
<proteinExistence type="inferred from homology"/>
<keyword id="KW-0040">ANK repeat</keyword>
<keyword id="KW-0945">Host-virus interaction</keyword>
<keyword id="KW-1100">Inhibition of host NF-kappa-B by virus</keyword>
<keyword id="KW-1185">Reference proteome</keyword>
<keyword id="KW-0677">Repeat</keyword>
<protein>
    <recommendedName>
        <fullName>I-Kappa-B like protein C2</fullName>
    </recommendedName>
</protein>
<accession>Q5I159</accession>
<comment type="function">
    <text evidence="1">Suppresses the host immune response through NF-kappa-B inactivation. Possesses ankyrin repeat domains required for NF-kappa-B binding but lacks the regulatory regions required for dissociation from NF-kappa-B and degradation. Therefore, prevents host NF-kappa-B release and subsequent activation (By similarity).</text>
</comment>
<comment type="similarity">
    <text evidence="2">Belongs to the polydnaviridae I-Kappa-B-like protein family.</text>
</comment>
<reference key="1">
    <citation type="journal article" date="2006" name="Virology">
        <title>Polydnavirus genomes reflect their dual roles as mutualists and pathogens.</title>
        <authorList>
            <person name="Webb B.A."/>
            <person name="Strand M.R."/>
            <person name="Dickey S.E."/>
            <person name="Beck M.H."/>
            <person name="Hilgarth R.S."/>
            <person name="Barney W.E."/>
            <person name="Kadash K."/>
            <person name="Kroemer J.A."/>
            <person name="Lindstrom K.G."/>
            <person name="Rattanadechakul W."/>
            <person name="Shelby K.S."/>
            <person name="Thoetkiattikul H."/>
            <person name="Turnbull M.W."/>
            <person name="Witherell R.A."/>
        </authorList>
    </citation>
    <scope>NUCLEOTIDE SEQUENCE [GENOMIC DNA]</scope>
</reference>
<evidence type="ECO:0000250" key="1"/>
<evidence type="ECO:0000305" key="2"/>
<dbReference type="EMBL" id="AY875681">
    <property type="protein sequence ID" value="AAW51773.1"/>
    <property type="molecule type" value="Genomic_DNA"/>
</dbReference>
<dbReference type="RefSeq" id="YP_239369.1">
    <property type="nucleotide sequence ID" value="NC_007031.1"/>
</dbReference>
<dbReference type="KEGG" id="vg:5075803"/>
<dbReference type="Proteomes" id="UP000008168">
    <property type="component" value="Genome"/>
</dbReference>
<dbReference type="GO" id="GO:0051059">
    <property type="term" value="F:NF-kappaB binding"/>
    <property type="evidence" value="ECO:0007669"/>
    <property type="project" value="TreeGrafter"/>
</dbReference>
<dbReference type="GO" id="GO:0071356">
    <property type="term" value="P:cellular response to tumor necrosis factor"/>
    <property type="evidence" value="ECO:0007669"/>
    <property type="project" value="TreeGrafter"/>
</dbReference>
<dbReference type="GO" id="GO:0085034">
    <property type="term" value="P:symbiont-mediated suppression of host NF-kappaB cascade"/>
    <property type="evidence" value="ECO:0007669"/>
    <property type="project" value="UniProtKB-KW"/>
</dbReference>
<dbReference type="Gene3D" id="1.25.40.20">
    <property type="entry name" value="Ankyrin repeat-containing domain"/>
    <property type="match status" value="1"/>
</dbReference>
<dbReference type="InterPro" id="IPR002110">
    <property type="entry name" value="Ankyrin_rpt"/>
</dbReference>
<dbReference type="InterPro" id="IPR036770">
    <property type="entry name" value="Ankyrin_rpt-contain_sf"/>
</dbReference>
<dbReference type="InterPro" id="IPR051070">
    <property type="entry name" value="NF-kappa-B_inhibitor"/>
</dbReference>
<dbReference type="PANTHER" id="PTHR46680">
    <property type="entry name" value="NF-KAPPA-B INHIBITOR ALPHA"/>
    <property type="match status" value="1"/>
</dbReference>
<dbReference type="PANTHER" id="PTHR46680:SF3">
    <property type="entry name" value="NF-KAPPA-B INHIBITOR CACTUS"/>
    <property type="match status" value="1"/>
</dbReference>
<dbReference type="Pfam" id="PF12796">
    <property type="entry name" value="Ank_2"/>
    <property type="match status" value="1"/>
</dbReference>
<dbReference type="SMART" id="SM00248">
    <property type="entry name" value="ANK"/>
    <property type="match status" value="3"/>
</dbReference>
<dbReference type="SUPFAM" id="SSF48403">
    <property type="entry name" value="Ankyrin repeat"/>
    <property type="match status" value="1"/>
</dbReference>
<dbReference type="PROSITE" id="PS50297">
    <property type="entry name" value="ANK_REP_REGION"/>
    <property type="match status" value="1"/>
</dbReference>
<dbReference type="PROSITE" id="PS50088">
    <property type="entry name" value="ANK_REPEAT"/>
    <property type="match status" value="1"/>
</dbReference>